<protein>
    <recommendedName>
        <fullName>Cytochrome b6-f complex subunit 7, chloroplastic</fullName>
    </recommendedName>
    <alternativeName>
        <fullName>Cytochrome b6-f complex 4 kDa subunit</fullName>
    </alternativeName>
    <alternativeName>
        <fullName>Cytochrome b6-f complex subunit PetM</fullName>
    </alternativeName>
    <alternativeName>
        <fullName>Cytochrome b6-f complex subunit VII</fullName>
    </alternativeName>
</protein>
<keyword id="KW-0002">3D-structure</keyword>
<keyword id="KW-0150">Chloroplast</keyword>
<keyword id="KW-0903">Direct protein sequencing</keyword>
<keyword id="KW-0249">Electron transport</keyword>
<keyword id="KW-0472">Membrane</keyword>
<keyword id="KW-0934">Plastid</keyword>
<keyword id="KW-0679">Respiratory chain</keyword>
<keyword id="KW-0793">Thylakoid</keyword>
<keyword id="KW-0809">Transit peptide</keyword>
<keyword id="KW-0812">Transmembrane</keyword>
<keyword id="KW-1133">Transmembrane helix</keyword>
<keyword id="KW-0813">Transport</keyword>
<comment type="function">
    <text>Component of the cytochrome b6-f complex, which mediates electron transfer between photosystem II (PSII) and photosystem I (PSI), cyclic electron flow around PSI, and state transitions.</text>
</comment>
<comment type="subunit">
    <text>The 4 large subunits of the cytochrome b6-f complex are cytochrome b6, subunit IV (17 kDa polypeptide, PetD), cytochrome f and the Rieske protein, while the 4 small subunits are PetG, PetL, PetM and PetN. The complex functions as a dimer.</text>
</comment>
<comment type="subcellular location">
    <subcellularLocation>
        <location>Plastid</location>
        <location>Chloroplast thylakoid membrane</location>
        <topology>Single-pass membrane protein</topology>
    </subcellularLocation>
</comment>
<comment type="similarity">
    <text evidence="5">Belongs to the PetM family.</text>
</comment>
<sequence length="99" mass="9998">MAMSIAARSACCGVAAPRSSTVRVAAARPAVRPSLRTAGQKAAPSRGVATKAVNELAMIAGEAEFIAGTALTMVGMTLVGLAIGFVLLRVESLVEEGKI</sequence>
<organism>
    <name type="scientific">Chlamydomonas reinhardtii</name>
    <name type="common">Chlamydomonas smithii</name>
    <dbReference type="NCBI Taxonomy" id="3055"/>
    <lineage>
        <taxon>Eukaryota</taxon>
        <taxon>Viridiplantae</taxon>
        <taxon>Chlorophyta</taxon>
        <taxon>core chlorophytes</taxon>
        <taxon>Chlorophyceae</taxon>
        <taxon>CS clade</taxon>
        <taxon>Chlamydomonadales</taxon>
        <taxon>Chlamydomonadaceae</taxon>
        <taxon>Chlamydomonas</taxon>
    </lineage>
</organism>
<dbReference type="EMBL" id="X92488">
    <property type="protein sequence ID" value="CAA63221.1"/>
    <property type="molecule type" value="mRNA"/>
</dbReference>
<dbReference type="EMBL" id="U36401">
    <property type="protein sequence ID" value="AAC49525.1"/>
    <property type="molecule type" value="Genomic_DNA"/>
</dbReference>
<dbReference type="PIR" id="T08070">
    <property type="entry name" value="T08070"/>
</dbReference>
<dbReference type="RefSeq" id="XP_001694096.1">
    <property type="nucleotide sequence ID" value="XM_001694044.1"/>
</dbReference>
<dbReference type="PDB" id="1Q90">
    <property type="method" value="X-ray"/>
    <property type="resolution" value="3.10 A"/>
    <property type="chains" value="M=61-99"/>
</dbReference>
<dbReference type="PDBsum" id="1Q90"/>
<dbReference type="SMR" id="Q42496"/>
<dbReference type="IntAct" id="Q42496">
    <property type="interactions" value="1"/>
</dbReference>
<dbReference type="PaxDb" id="3055-EDP03032"/>
<dbReference type="EnsemblPlants" id="PNW76141">
    <property type="protein sequence ID" value="PNW76141"/>
    <property type="gene ID" value="CHLRE_12g546150v5"/>
</dbReference>
<dbReference type="Gramene" id="PNW76141">
    <property type="protein sequence ID" value="PNW76141"/>
    <property type="gene ID" value="CHLRE_12g546150v5"/>
</dbReference>
<dbReference type="KEGG" id="cre:CHLRE_12g546150v5"/>
<dbReference type="eggNOG" id="ENOG502T01X">
    <property type="taxonomic scope" value="Eukaryota"/>
</dbReference>
<dbReference type="HOGENOM" id="CLU_2323765_0_0_1"/>
<dbReference type="OrthoDB" id="1926597at2759"/>
<dbReference type="BioCyc" id="CHLAMY:CHLREDRAFT_147968-MONOMER"/>
<dbReference type="BioCyc" id="MetaCyc:CHLREDRAFT_147968-MONOMER"/>
<dbReference type="EvolutionaryTrace" id="Q42496"/>
<dbReference type="GO" id="GO:0009535">
    <property type="term" value="C:chloroplast thylakoid membrane"/>
    <property type="evidence" value="ECO:0007669"/>
    <property type="project" value="UniProtKB-SubCell"/>
</dbReference>
<dbReference type="GO" id="GO:0009512">
    <property type="term" value="C:cytochrome b6f complex"/>
    <property type="evidence" value="ECO:0007669"/>
    <property type="project" value="InterPro"/>
</dbReference>
<dbReference type="HAMAP" id="MF_00396">
    <property type="entry name" value="Cytb6_f_PetM"/>
    <property type="match status" value="1"/>
</dbReference>
<dbReference type="InterPro" id="IPR012595">
    <property type="entry name" value="PetM_cyt_b6/f_cplx_su7"/>
</dbReference>
<dbReference type="Pfam" id="PF08041">
    <property type="entry name" value="PetM"/>
    <property type="match status" value="1"/>
</dbReference>
<dbReference type="SUPFAM" id="SSF103441">
    <property type="entry name" value="PetM subunit of the cytochrome b6f complex"/>
    <property type="match status" value="1"/>
</dbReference>
<name>PETM_CHLRE</name>
<accession>Q42496</accession>
<evidence type="ECO:0000255" key="1"/>
<evidence type="ECO:0000269" key="2">
    <source>
    </source>
</evidence>
<evidence type="ECO:0000269" key="3">
    <source>
    </source>
</evidence>
<evidence type="ECO:0000269" key="4">
    <source ref="4"/>
</evidence>
<evidence type="ECO:0000305" key="5"/>
<evidence type="ECO:0007829" key="6">
    <source>
        <dbReference type="PDB" id="1Q90"/>
    </source>
</evidence>
<gene>
    <name type="primary">petM</name>
    <name type="synonym">petX</name>
</gene>
<proteinExistence type="evidence at protein level"/>
<feature type="transit peptide" description="Chloroplast" evidence="2 3 4">
    <location>
        <begin position="1"/>
        <end position="60"/>
    </location>
</feature>
<feature type="chain" id="PRO_0000023864" description="Cytochrome b6-f complex subunit 7, chloroplastic">
    <location>
        <begin position="61"/>
        <end position="99"/>
    </location>
</feature>
<feature type="topological domain" description="Lumenal" evidence="1">
    <location>
        <begin position="61"/>
        <end position="67"/>
    </location>
</feature>
<feature type="transmembrane region" description="Helical" evidence="1">
    <location>
        <begin position="68"/>
        <end position="88"/>
    </location>
</feature>
<feature type="topological domain" description="Stromal" evidence="1">
    <location>
        <begin position="89"/>
        <end position="99"/>
    </location>
</feature>
<feature type="helix" evidence="6">
    <location>
        <begin position="63"/>
        <end position="93"/>
    </location>
</feature>
<reference key="1">
    <citation type="journal article" date="1996" name="J. Biol. Chem.">
        <title>The 4-kDa nuclear-encoded PetM polypeptide of the chloroplast cytochrome b6f complex. Nucleic acid and protein sequences, targeting signals, transmembrane topology.</title>
        <authorList>
            <person name="de Vitry C."/>
            <person name="Breyton C."/>
            <person name="Pierre Y."/>
            <person name="Popot J.-L."/>
        </authorList>
    </citation>
    <scope>NUCLEOTIDE SEQUENCE [MRNA]</scope>
    <scope>PROTEIN SEQUENCE OF 61-98</scope>
    <source>
        <strain>cw15</strain>
    </source>
</reference>
<reference key="2">
    <citation type="journal article" date="1996" name="Biochim. Biophys. Acta">
        <title>Nucleotide sequence of the PetM gene encoding a 4 kDa subunit of the cytochrome b6f complex from Chlamydomonas reinhardtii.</title>
        <authorList>
            <person name="Ketchner S.L."/>
            <person name="Malkin R."/>
        </authorList>
    </citation>
    <scope>NUCLEOTIDE SEQUENCE [GENOMIC DNA]</scope>
    <source>
        <strain>CC-1928</strain>
    </source>
</reference>
<reference key="3">
    <citation type="journal article" date="1995" name="J. Biol. Chem.">
        <title>Purification and characterization of the cytochrome b6 f complex from Chlamydomonas reinhardtii.</title>
        <authorList>
            <person name="Pierre Y."/>
            <person name="Breyton C."/>
            <person name="Kramer D."/>
            <person name="Popot J.-L."/>
        </authorList>
    </citation>
    <scope>PROTEIN SEQUENCE OF 61-87</scope>
    <scope>CHARACTERIZATION</scope>
    <source>
        <strain>WT12</strain>
    </source>
</reference>
<reference key="4">
    <citation type="journal article" date="1993" name="Photosyn. Res.">
        <title>Low molecular weight subunits associated with the cytochrome b6f complexes from spinach and Chlamydomonas reinhardtii.</title>
        <authorList>
            <person name="Schmidt C.L."/>
            <person name="Malkin R."/>
        </authorList>
    </citation>
    <scope>PROTEIN SEQUENCE OF 61-82</scope>
    <source>
        <strain>CC-124</strain>
    </source>
</reference>
<reference key="5">
    <citation type="journal article" date="2003" name="Nature">
        <title>An atypical haem in the cytochrome b(6)f complex.</title>
        <authorList>
            <person name="Stroebel D."/>
            <person name="Choquet Y."/>
            <person name="Popot J.-L."/>
            <person name="Picot D."/>
        </authorList>
    </citation>
    <scope>X-RAY CRYSTALLOGRAPHY (3.1 ANGSTROMS) OF 61-99</scope>
</reference>